<evidence type="ECO:0000255" key="1">
    <source>
        <dbReference type="PROSITE-ProRule" id="PRU00537"/>
    </source>
</evidence>
<evidence type="ECO:0000255" key="2">
    <source>
        <dbReference type="PROSITE-ProRule" id="PRU00538"/>
    </source>
</evidence>
<evidence type="ECO:0000255" key="3">
    <source>
        <dbReference type="PROSITE-ProRule" id="PRU00875"/>
    </source>
</evidence>
<evidence type="ECO:0000255" key="4">
    <source>
        <dbReference type="PROSITE-ProRule" id="PRU00876"/>
    </source>
</evidence>
<evidence type="ECO:0000256" key="5">
    <source>
        <dbReference type="SAM" id="MobiDB-lite"/>
    </source>
</evidence>
<evidence type="ECO:0000269" key="6">
    <source>
    </source>
</evidence>
<evidence type="ECO:0000269" key="7">
    <source>
    </source>
</evidence>
<evidence type="ECO:0000305" key="8"/>
<evidence type="ECO:0007829" key="9">
    <source>
        <dbReference type="PDB" id="4IGQ"/>
    </source>
</evidence>
<comment type="function">
    <text evidence="6 7">Histone demethylase that demethylates 'Lys-4' (H3K4me) of histone H3 with a specific activity for H3K4me3, H3K4me2 and H3K4me1. No activity on H3K9me3/2/1, H3K27me3/2/1 and H3K36me3/2/1. Involved in the control of stem elongation by regulating methylation states of H3K4me3 on cytokinin oxidase (CKX) gene family, which may cause increased expression of CKX genes and reduced cytokinin levels. Prevents ectopic retrotransposition by regulating the levels of H3K4me3 in two non-LTR retrotransposons KARMA and LINE-1 (L1) and reinforcing their repressed states.</text>
</comment>
<comment type="catalytic activity">
    <reaction evidence="6 7">
        <text>N(6),N(6),N(6)-trimethyl-L-lysyl(4)-[histone H3] + 3 2-oxoglutarate + 3 O2 = L-lysyl(4)-[histone H3] + 3 formaldehyde + 3 succinate + 3 CO2</text>
        <dbReference type="Rhea" id="RHEA:60208"/>
        <dbReference type="Rhea" id="RHEA-COMP:15537"/>
        <dbReference type="Rhea" id="RHEA-COMP:15547"/>
        <dbReference type="ChEBI" id="CHEBI:15379"/>
        <dbReference type="ChEBI" id="CHEBI:16526"/>
        <dbReference type="ChEBI" id="CHEBI:16810"/>
        <dbReference type="ChEBI" id="CHEBI:16842"/>
        <dbReference type="ChEBI" id="CHEBI:29969"/>
        <dbReference type="ChEBI" id="CHEBI:30031"/>
        <dbReference type="ChEBI" id="CHEBI:61961"/>
        <dbReference type="EC" id="1.14.11.67"/>
    </reaction>
    <physiologicalReaction direction="left-to-right" evidence="6 7">
        <dbReference type="Rhea" id="RHEA:60209"/>
    </physiologicalReaction>
</comment>
<comment type="cofactor">
    <cofactor evidence="7">
        <name>Fe(2+)</name>
        <dbReference type="ChEBI" id="CHEBI:29033"/>
    </cofactor>
    <text evidence="7">Binds 1 Fe(2+) ion per subunit.</text>
</comment>
<comment type="subcellular location">
    <subcellularLocation>
        <location evidence="1 6 7">Nucleus</location>
    </subcellularLocation>
</comment>
<comment type="tissue specificity">
    <text evidence="6">Expressed in roots, leaf sheaths, stems and panicles.</text>
</comment>
<comment type="disruption phenotype">
    <text evidence="6 7">Semi-dwarf plants and reduced seed size. Small panicle enclosure phenotype.</text>
</comment>
<comment type="sequence caution" evidence="8">
    <conflict type="erroneous initiation">
        <sequence resource="EMBL-CDS" id="EEE62643"/>
    </conflict>
    <text>Truncated N-terminus.</text>
</comment>
<sequence length="1238" mass="137382">MMGVTTTLNEDTEPSIPPGFGPFATLPLWGIHNDAKPAVTHSTPVQALQSIRKDSEECQPSAAVSRSDTPCSTSGTQTCRKSLRNRPPIDYSRFEHISDEDSDVEIVEKDVSSTRRRQQLPKGVLRGCAECSDCQKVIAKWNPAGARRPVLDEAPVFYPTEEEFEDTLKYIESIRPMAEPYGICRIVPPSSWKPPCLLKDKSIWEGSKFSTRVQKVDKLQNRKSSKKGRRGGMMKRRKLAESEENSATAHTQTGMQQSPERFGFEPGPEFTLQTFQKYADDFSKQYFRKDTSMDSVPSVEDIEGEYWRIVEVPTEEIEVIYGADLETGTFGSGFPKLSPETKSDAEDKYAQSGWNLNNLPRLQGSVLSFEGGDISGVLVPWVYVGMCFSSFCWHVEDHHLYSLNYMHWGAPKLWYGVPGKDAVNLESAMRKHLPELFEEQPDLLHNLVTQFSPSLLKSEGVHVYRCVQHEGEFVLTFPRAYHAGFNCGFNCAEAVNVAPIDWLPIGHNAVELYREQARKITISHDKLLLGAAREAIRAQWDILFLKRNTADNMRWKSICGADSTIFKALKARIETELVQRKTLGVPAQSRKMDAEFDSIDRECALCYYDLHLSASGCPCCPEKYACLVHAKQLCSCDWDKRFFLFRYDVNELNILADALGGKLSAIHRWGVSDLGLSLSSCVKREKVQDSKTVRRLTDGPRRSYMSQASAVSLVSSSTSNEQKDEGNKIMKIASPQTNNVCPSVEQRKSENISPLKEPCVRNELSCTTNSDSNGLQYNGGLGGHKGSAPGLPVSSSPSFSSNVATRPISTSSVSMKIVQGLVASKSCIQASSRTGDSRSLLGEHHNRSPAMIHDGTNMKSSLESSNNSCRLIASDYNATPCHSSKDQVLVTPGTNASVVTLKDSSQVHSASSQQFVRTGPWTQSASHEASSPSTSALKPSLDPPAMKNLYGGFTQGSAHPGPPSFSNQQPNDGRLQRTSESLPGVEARARGHPTVTAQPALEIHSRNGGAQKGPRIANVVHRFKCSVEPLEIGVVLSGRLWSSSQAIFPKGFRSRVKYFSIVDPIQMAYYISEILDAGMQGPLFMVKLENCPGEVFINLSPTKCWNMVRERLNMEIRRQLNMGKSNLPTLQPPGSVDGLEMFGLLSPPIVQAIWARDRDHICTEYWRSRPHVLIEDPNNRHMLSQGPPLLALRGLIQRANRDELQVLRSLMTNSNNLDDSSRQQAAHIIEEEIAKQLC</sequence>
<keyword id="KW-0002">3D-structure</keyword>
<keyword id="KW-0156">Chromatin regulator</keyword>
<keyword id="KW-0223">Dioxygenase</keyword>
<keyword id="KW-0408">Iron</keyword>
<keyword id="KW-0479">Metal-binding</keyword>
<keyword id="KW-0539">Nucleus</keyword>
<keyword id="KW-0560">Oxidoreductase</keyword>
<keyword id="KW-1185">Reference proteome</keyword>
<keyword id="KW-0804">Transcription</keyword>
<keyword id="KW-0805">Transcription regulation</keyword>
<reference key="1">
    <citation type="journal article" date="2005" name="Mol. Genet. Genomics">
        <title>A fine physical map of the rice chromosome 5.</title>
        <authorList>
            <person name="Cheng C.-H."/>
            <person name="Chung M.C."/>
            <person name="Liu S.-M."/>
            <person name="Chen S.-K."/>
            <person name="Kao F.Y."/>
            <person name="Lin S.-J."/>
            <person name="Hsiao S.-H."/>
            <person name="Tseng I.C."/>
            <person name="Hsing Y.-I.C."/>
            <person name="Wu H.-P."/>
            <person name="Chen C.-S."/>
            <person name="Shaw J.-F."/>
            <person name="Wu J."/>
            <person name="Matsumoto T."/>
            <person name="Sasaki T."/>
            <person name="Chen H.-C."/>
            <person name="Chow T.-Y."/>
        </authorList>
    </citation>
    <scope>NUCLEOTIDE SEQUENCE [LARGE SCALE GENOMIC DNA]</scope>
    <source>
        <strain>cv. Nipponbare</strain>
    </source>
</reference>
<reference key="2">
    <citation type="journal article" date="2005" name="Nature">
        <title>The map-based sequence of the rice genome.</title>
        <authorList>
            <consortium name="International rice genome sequencing project (IRGSP)"/>
        </authorList>
    </citation>
    <scope>NUCLEOTIDE SEQUENCE [LARGE SCALE GENOMIC DNA]</scope>
    <source>
        <strain>cv. Nipponbare</strain>
    </source>
</reference>
<reference key="3">
    <citation type="journal article" date="2008" name="Nucleic Acids Res.">
        <title>The rice annotation project database (RAP-DB): 2008 update.</title>
        <authorList>
            <consortium name="The rice annotation project (RAP)"/>
        </authorList>
    </citation>
    <scope>GENOME REANNOTATION</scope>
    <source>
        <strain>cv. Nipponbare</strain>
    </source>
</reference>
<reference key="4">
    <citation type="journal article" date="2013" name="Rice">
        <title>Improvement of the Oryza sativa Nipponbare reference genome using next generation sequence and optical map data.</title>
        <authorList>
            <person name="Kawahara Y."/>
            <person name="de la Bastide M."/>
            <person name="Hamilton J.P."/>
            <person name="Kanamori H."/>
            <person name="McCombie W.R."/>
            <person name="Ouyang S."/>
            <person name="Schwartz D.C."/>
            <person name="Tanaka T."/>
            <person name="Wu J."/>
            <person name="Zhou S."/>
            <person name="Childs K.L."/>
            <person name="Davidson R.M."/>
            <person name="Lin H."/>
            <person name="Quesada-Ocampo L."/>
            <person name="Vaillancourt B."/>
            <person name="Sakai H."/>
            <person name="Lee S.S."/>
            <person name="Kim J."/>
            <person name="Numa H."/>
            <person name="Itoh T."/>
            <person name="Buell C.R."/>
            <person name="Matsumoto T."/>
        </authorList>
    </citation>
    <scope>GENOME REANNOTATION</scope>
    <source>
        <strain>cv. Nipponbare</strain>
    </source>
</reference>
<reference key="5">
    <citation type="journal article" date="2005" name="PLoS Biol.">
        <title>The genomes of Oryza sativa: a history of duplications.</title>
        <authorList>
            <person name="Yu J."/>
            <person name="Wang J."/>
            <person name="Lin W."/>
            <person name="Li S."/>
            <person name="Li H."/>
            <person name="Zhou J."/>
            <person name="Ni P."/>
            <person name="Dong W."/>
            <person name="Hu S."/>
            <person name="Zeng C."/>
            <person name="Zhang J."/>
            <person name="Zhang Y."/>
            <person name="Li R."/>
            <person name="Xu Z."/>
            <person name="Li S."/>
            <person name="Li X."/>
            <person name="Zheng H."/>
            <person name="Cong L."/>
            <person name="Lin L."/>
            <person name="Yin J."/>
            <person name="Geng J."/>
            <person name="Li G."/>
            <person name="Shi J."/>
            <person name="Liu J."/>
            <person name="Lv H."/>
            <person name="Li J."/>
            <person name="Wang J."/>
            <person name="Deng Y."/>
            <person name="Ran L."/>
            <person name="Shi X."/>
            <person name="Wang X."/>
            <person name="Wu Q."/>
            <person name="Li C."/>
            <person name="Ren X."/>
            <person name="Wang J."/>
            <person name="Wang X."/>
            <person name="Li D."/>
            <person name="Liu D."/>
            <person name="Zhang X."/>
            <person name="Ji Z."/>
            <person name="Zhao W."/>
            <person name="Sun Y."/>
            <person name="Zhang Z."/>
            <person name="Bao J."/>
            <person name="Han Y."/>
            <person name="Dong L."/>
            <person name="Ji J."/>
            <person name="Chen P."/>
            <person name="Wu S."/>
            <person name="Liu J."/>
            <person name="Xiao Y."/>
            <person name="Bu D."/>
            <person name="Tan J."/>
            <person name="Yang L."/>
            <person name="Ye C."/>
            <person name="Zhang J."/>
            <person name="Xu J."/>
            <person name="Zhou Y."/>
            <person name="Yu Y."/>
            <person name="Zhang B."/>
            <person name="Zhuang S."/>
            <person name="Wei H."/>
            <person name="Liu B."/>
            <person name="Lei M."/>
            <person name="Yu H."/>
            <person name="Li Y."/>
            <person name="Xu H."/>
            <person name="Wei S."/>
            <person name="He X."/>
            <person name="Fang L."/>
            <person name="Zhang Z."/>
            <person name="Zhang Y."/>
            <person name="Huang X."/>
            <person name="Su Z."/>
            <person name="Tong W."/>
            <person name="Li J."/>
            <person name="Tong Z."/>
            <person name="Li S."/>
            <person name="Ye J."/>
            <person name="Wang L."/>
            <person name="Fang L."/>
            <person name="Lei T."/>
            <person name="Chen C.-S."/>
            <person name="Chen H.-C."/>
            <person name="Xu Z."/>
            <person name="Li H."/>
            <person name="Huang H."/>
            <person name="Zhang F."/>
            <person name="Xu H."/>
            <person name="Li N."/>
            <person name="Zhao C."/>
            <person name="Li S."/>
            <person name="Dong L."/>
            <person name="Huang Y."/>
            <person name="Li L."/>
            <person name="Xi Y."/>
            <person name="Qi Q."/>
            <person name="Li W."/>
            <person name="Zhang B."/>
            <person name="Hu W."/>
            <person name="Zhang Y."/>
            <person name="Tian X."/>
            <person name="Jiao Y."/>
            <person name="Liang X."/>
            <person name="Jin J."/>
            <person name="Gao L."/>
            <person name="Zheng W."/>
            <person name="Hao B."/>
            <person name="Liu S.-M."/>
            <person name="Wang W."/>
            <person name="Yuan L."/>
            <person name="Cao M."/>
            <person name="McDermott J."/>
            <person name="Samudrala R."/>
            <person name="Wang J."/>
            <person name="Wong G.K.-S."/>
            <person name="Yang H."/>
        </authorList>
    </citation>
    <scope>NUCLEOTIDE SEQUENCE [LARGE SCALE GENOMIC DNA]</scope>
    <source>
        <strain>cv. Nipponbare</strain>
    </source>
</reference>
<reference key="6">
    <citation type="journal article" date="2003" name="Science">
        <title>Collection, mapping, and annotation of over 28,000 cDNA clones from japonica rice.</title>
        <authorList>
            <consortium name="The rice full-length cDNA consortium"/>
        </authorList>
    </citation>
    <scope>NUCLEOTIDE SEQUENCE [LARGE SCALE MRNA]</scope>
    <source>
        <strain>cv. Nipponbare</strain>
    </source>
</reference>
<reference key="7">
    <citation type="journal article" date="2013" name="PLoS Genet.">
        <title>Structural basis of a histone H3 lysine 4 demethylase required for stem elongation in rice.</title>
        <authorList>
            <person name="Chen Q."/>
            <person name="Chen X."/>
            <person name="Wang Q."/>
            <person name="Zhang F."/>
            <person name="Lou Z."/>
            <person name="Zhang Q."/>
            <person name="Zhou D.X."/>
        </authorList>
    </citation>
    <scope>X-RAY CRYSTALLOGRAPHY (2.35 ANGSTROMS) OF 139-498 IN COMPLEX WITH IRON AND ALPHA-KETOGLUTARATE</scope>
    <scope>FUNCTION</scope>
    <scope>CATALYTIC ACTIVITY</scope>
    <scope>SUBCELLULAR LOCATION</scope>
    <scope>DISRUPTION PHENOTYPE</scope>
    <scope>MUTAGENESIS OF TYR-321; GLY-376; TRP-381; HIS-394; GLU-396; ASN-404; LYS-412; LEU-447; HIS-482; ALA-494 AND ASN-496</scope>
    <source>
        <strain>cv. Zhonghua 11</strain>
    </source>
</reference>
<reference key="8">
    <citation type="journal article" date="2013" name="Proc. Natl. Acad. Sci. U.S.A.">
        <title>Control of transposon activity by a histone H3K4 demethylase in rice.</title>
        <authorList>
            <person name="Cui X."/>
            <person name="Jin P."/>
            <person name="Cui X."/>
            <person name="Gu L."/>
            <person name="Lu Z."/>
            <person name="Xue Y."/>
            <person name="Wei L."/>
            <person name="Qi J."/>
            <person name="Song X."/>
            <person name="Luo M."/>
            <person name="An G."/>
            <person name="Cao X."/>
        </authorList>
    </citation>
    <scope>FUNCTION</scope>
    <scope>CATALYTIC ACTIVITY</scope>
    <scope>SUBCELLULAR LOCATION</scope>
    <scope>TISSUE SPECIFICITY</scope>
    <scope>DISRUPTION PHENOTYPE</scope>
    <scope>MUTAGENESIS OF HIS-394</scope>
</reference>
<name>JM703_ORYSJ</name>
<feature type="chain" id="PRO_0000430000" description="Lysine-specific demethylase JMJ703">
    <location>
        <begin position="1"/>
        <end position="1238"/>
    </location>
</feature>
<feature type="domain" description="JmjN" evidence="1">
    <location>
        <begin position="154"/>
        <end position="195"/>
    </location>
</feature>
<feature type="domain" description="JmjC" evidence="2">
    <location>
        <begin position="348"/>
        <end position="514"/>
    </location>
</feature>
<feature type="domain" description="FYR N-terminal" evidence="3">
    <location>
        <begin position="1019"/>
        <end position="1077"/>
    </location>
</feature>
<feature type="domain" description="FYR C-terminal" evidence="4">
    <location>
        <begin position="1079"/>
        <end position="1169"/>
    </location>
</feature>
<feature type="region of interest" description="Disordered" evidence="5">
    <location>
        <begin position="56"/>
        <end position="79"/>
    </location>
</feature>
<feature type="region of interest" description="Disordered" evidence="5">
    <location>
        <begin position="215"/>
        <end position="266"/>
    </location>
</feature>
<feature type="region of interest" description="Disordered" evidence="5">
    <location>
        <begin position="699"/>
        <end position="725"/>
    </location>
</feature>
<feature type="region of interest" description="Disordered" evidence="5">
    <location>
        <begin position="777"/>
        <end position="798"/>
    </location>
</feature>
<feature type="region of interest" description="Disordered" evidence="5">
    <location>
        <begin position="834"/>
        <end position="863"/>
    </location>
</feature>
<feature type="region of interest" description="Disordered" evidence="5">
    <location>
        <begin position="910"/>
        <end position="978"/>
    </location>
</feature>
<feature type="compositionally biased region" description="Polar residues" evidence="5">
    <location>
        <begin position="62"/>
        <end position="79"/>
    </location>
</feature>
<feature type="compositionally biased region" description="Basic residues" evidence="5">
    <location>
        <begin position="221"/>
        <end position="238"/>
    </location>
</feature>
<feature type="compositionally biased region" description="Polar residues" evidence="5">
    <location>
        <begin position="245"/>
        <end position="259"/>
    </location>
</feature>
<feature type="compositionally biased region" description="Low complexity" evidence="5">
    <location>
        <begin position="706"/>
        <end position="719"/>
    </location>
</feature>
<feature type="compositionally biased region" description="Polar residues" evidence="5">
    <location>
        <begin position="910"/>
        <end position="923"/>
    </location>
</feature>
<feature type="compositionally biased region" description="Low complexity" evidence="5">
    <location>
        <begin position="924"/>
        <end position="936"/>
    </location>
</feature>
<feature type="compositionally biased region" description="Polar residues" evidence="5">
    <location>
        <begin position="964"/>
        <end position="978"/>
    </location>
</feature>
<feature type="binding site" evidence="7">
    <location>
        <position position="394"/>
    </location>
    <ligand>
        <name>Fe cation</name>
        <dbReference type="ChEBI" id="CHEBI:24875"/>
    </ligand>
</feature>
<feature type="binding site" evidence="7">
    <location>
        <position position="396"/>
    </location>
    <ligand>
        <name>Fe cation</name>
        <dbReference type="ChEBI" id="CHEBI:24875"/>
    </ligand>
</feature>
<feature type="binding site" evidence="7">
    <location>
        <position position="482"/>
    </location>
    <ligand>
        <name>Fe cation</name>
        <dbReference type="ChEBI" id="CHEBI:24875"/>
    </ligand>
</feature>
<feature type="mutagenesis site" description="Loss of activity on H3K4me3." evidence="7">
    <original>Y</original>
    <variation>A</variation>
    <location>
        <position position="321"/>
    </location>
</feature>
<feature type="mutagenesis site" description="Loss of activity on H3K4me3/2/1." evidence="7">
    <original>G</original>
    <variation>A</variation>
    <location>
        <position position="376"/>
    </location>
</feature>
<feature type="mutagenesis site" description="Loss of activity on H3K4me3/2/1." evidence="7">
    <original>W</original>
    <variation>A</variation>
    <location>
        <position position="381"/>
    </location>
</feature>
<feature type="mutagenesis site" description="Loss of activity on H3K4me3/1.">
    <original>Y</original>
    <variation>A</variation>
    <location>
        <position position="383"/>
    </location>
</feature>
<feature type="mutagenesis site" description="Loss of activity on H3K4me3/2/1." evidence="6 7">
    <original>H</original>
    <variation>A</variation>
    <location>
        <position position="394"/>
    </location>
</feature>
<feature type="mutagenesis site" description="Loss of activity on H3K4me3/2/1." evidence="7">
    <original>E</original>
    <variation>A</variation>
    <location>
        <position position="396"/>
    </location>
</feature>
<feature type="mutagenesis site" description="No effect on demethylase activity." evidence="7">
    <original>N</original>
    <variation>A</variation>
    <location>
        <position position="404"/>
    </location>
</feature>
<feature type="mutagenesis site" description="Loss of activity on H3K4me3/2/1." evidence="7">
    <original>K</original>
    <variation>A</variation>
    <location>
        <position position="412"/>
    </location>
</feature>
<feature type="mutagenesis site" description="Loss of activity on H3K4me3/2/1." evidence="7">
    <original>L</original>
    <variation>A</variation>
    <location>
        <position position="447"/>
    </location>
</feature>
<feature type="mutagenesis site" description="Loss of activity on H3K4me3/2/1." evidence="7">
    <original>H</original>
    <variation>Y</variation>
    <location>
        <position position="482"/>
    </location>
</feature>
<feature type="mutagenesis site" description="Loss of activity on H3K4me3/2." evidence="7">
    <original>A</original>
    <variation>S</variation>
    <location>
        <position position="494"/>
    </location>
</feature>
<feature type="mutagenesis site" description="Loss of activity on H3K4me3." evidence="7">
    <original>N</original>
    <variation>A</variation>
    <location>
        <position position="496"/>
    </location>
</feature>
<feature type="helix" evidence="9">
    <location>
        <begin position="143"/>
        <end position="145"/>
    </location>
</feature>
<feature type="helix" evidence="9">
    <location>
        <begin position="161"/>
        <end position="164"/>
    </location>
</feature>
<feature type="helix" evidence="9">
    <location>
        <begin position="167"/>
        <end position="178"/>
    </location>
</feature>
<feature type="helix" evidence="9">
    <location>
        <begin position="179"/>
        <end position="181"/>
    </location>
</feature>
<feature type="strand" evidence="9">
    <location>
        <begin position="182"/>
        <end position="186"/>
    </location>
</feature>
<feature type="helix" evidence="9">
    <location>
        <begin position="201"/>
        <end position="206"/>
    </location>
</feature>
<feature type="strand" evidence="9">
    <location>
        <begin position="209"/>
        <end position="215"/>
    </location>
</feature>
<feature type="helix" evidence="9">
    <location>
        <begin position="216"/>
        <end position="218"/>
    </location>
</feature>
<feature type="strand" evidence="9">
    <location>
        <begin position="266"/>
        <end position="270"/>
    </location>
</feature>
<feature type="helix" evidence="9">
    <location>
        <begin position="272"/>
        <end position="286"/>
    </location>
</feature>
<feature type="helix" evidence="9">
    <location>
        <begin position="299"/>
        <end position="311"/>
    </location>
</feature>
<feature type="strand" evidence="9">
    <location>
        <begin position="318"/>
        <end position="326"/>
    </location>
</feature>
<feature type="helix" evidence="9">
    <location>
        <begin position="356"/>
        <end position="358"/>
    </location>
</feature>
<feature type="turn" evidence="9">
    <location>
        <begin position="359"/>
        <end position="361"/>
    </location>
</feature>
<feature type="strand" evidence="9">
    <location>
        <begin position="381"/>
        <end position="385"/>
    </location>
</feature>
<feature type="strand" evidence="9">
    <location>
        <begin position="390"/>
        <end position="394"/>
    </location>
</feature>
<feature type="helix" evidence="9">
    <location>
        <begin position="397"/>
        <end position="399"/>
    </location>
</feature>
<feature type="strand" evidence="9">
    <location>
        <begin position="401"/>
        <end position="410"/>
    </location>
</feature>
<feature type="strand" evidence="9">
    <location>
        <begin position="412"/>
        <end position="417"/>
    </location>
</feature>
<feature type="helix" evidence="9">
    <location>
        <begin position="419"/>
        <end position="421"/>
    </location>
</feature>
<feature type="helix" evidence="9">
    <location>
        <begin position="422"/>
        <end position="432"/>
    </location>
</feature>
<feature type="helix" evidence="9">
    <location>
        <begin position="434"/>
        <end position="439"/>
    </location>
</feature>
<feature type="helix" evidence="9">
    <location>
        <begin position="443"/>
        <end position="446"/>
    </location>
</feature>
<feature type="helix" evidence="9">
    <location>
        <begin position="453"/>
        <end position="458"/>
    </location>
</feature>
<feature type="strand" evidence="9">
    <location>
        <begin position="464"/>
        <end position="468"/>
    </location>
</feature>
<feature type="strand" evidence="9">
    <location>
        <begin position="473"/>
        <end position="476"/>
    </location>
</feature>
<feature type="strand" evidence="9">
    <location>
        <begin position="481"/>
        <end position="497"/>
    </location>
</feature>
<proteinExistence type="evidence at protein level"/>
<accession>Q53WJ1</accession>
<accession>A0A0P0WIZ4</accession>
<accession>B9FMY1</accession>
<dbReference type="EC" id="1.14.11.67" evidence="6 7"/>
<dbReference type="EMBL" id="AC135427">
    <property type="protein sequence ID" value="AAV59453.1"/>
    <property type="molecule type" value="Genomic_DNA"/>
</dbReference>
<dbReference type="EMBL" id="AP008211">
    <property type="protein sequence ID" value="BAF16781.1"/>
    <property type="molecule type" value="Genomic_DNA"/>
</dbReference>
<dbReference type="EMBL" id="AP014961">
    <property type="protein sequence ID" value="BAS92678.1"/>
    <property type="molecule type" value="Genomic_DNA"/>
</dbReference>
<dbReference type="EMBL" id="CM000142">
    <property type="protein sequence ID" value="EEE62643.1"/>
    <property type="status" value="ALT_INIT"/>
    <property type="molecule type" value="Genomic_DNA"/>
</dbReference>
<dbReference type="EMBL" id="AK121381">
    <property type="protein sequence ID" value="BAH00458.1"/>
    <property type="molecule type" value="mRNA"/>
</dbReference>
<dbReference type="RefSeq" id="XP_015639402.1">
    <property type="nucleotide sequence ID" value="XM_015783916.1"/>
</dbReference>
<dbReference type="PDB" id="4IGO">
    <property type="method" value="X-ray"/>
    <property type="resolution" value="2.40 A"/>
    <property type="chains" value="A=139-498"/>
</dbReference>
<dbReference type="PDB" id="4IGP">
    <property type="method" value="X-ray"/>
    <property type="resolution" value="3.00 A"/>
    <property type="chains" value="A=139-498"/>
</dbReference>
<dbReference type="PDB" id="4IGQ">
    <property type="method" value="X-ray"/>
    <property type="resolution" value="2.35 A"/>
    <property type="chains" value="A=139-498"/>
</dbReference>
<dbReference type="PDBsum" id="4IGO"/>
<dbReference type="PDBsum" id="4IGP"/>
<dbReference type="PDBsum" id="4IGQ"/>
<dbReference type="SMR" id="Q53WJ1"/>
<dbReference type="FunCoup" id="Q53WJ1">
    <property type="interactions" value="613"/>
</dbReference>
<dbReference type="STRING" id="39947.Q53WJ1"/>
<dbReference type="PaxDb" id="39947-Q53WJ1"/>
<dbReference type="EnsemblPlants" id="Os05t0196500-01">
    <property type="protein sequence ID" value="Os05t0196500-01"/>
    <property type="gene ID" value="Os05g0196500"/>
</dbReference>
<dbReference type="Gramene" id="Os05t0196500-01">
    <property type="protein sequence ID" value="Os05t0196500-01"/>
    <property type="gene ID" value="Os05g0196500"/>
</dbReference>
<dbReference type="KEGG" id="dosa:Os05g0196500"/>
<dbReference type="eggNOG" id="KOG1246">
    <property type="taxonomic scope" value="Eukaryota"/>
</dbReference>
<dbReference type="HOGENOM" id="CLU_000991_8_0_1"/>
<dbReference type="InParanoid" id="Q53WJ1"/>
<dbReference type="OMA" id="CPDCANC"/>
<dbReference type="OrthoDB" id="1678912at2759"/>
<dbReference type="BRENDA" id="1.14.11.67">
    <property type="organism ID" value="4460"/>
</dbReference>
<dbReference type="EvolutionaryTrace" id="Q53WJ1"/>
<dbReference type="Proteomes" id="UP000000763">
    <property type="component" value="Chromosome 5"/>
</dbReference>
<dbReference type="Proteomes" id="UP000007752">
    <property type="component" value="Chromosome 5"/>
</dbReference>
<dbReference type="Proteomes" id="UP000059680">
    <property type="component" value="Chromosome 5"/>
</dbReference>
<dbReference type="GO" id="GO:0000785">
    <property type="term" value="C:chromatin"/>
    <property type="evidence" value="ECO:0000318"/>
    <property type="project" value="GO_Central"/>
</dbReference>
<dbReference type="GO" id="GO:0005634">
    <property type="term" value="C:nucleus"/>
    <property type="evidence" value="ECO:0000314"/>
    <property type="project" value="UniProtKB"/>
</dbReference>
<dbReference type="GO" id="GO:0008198">
    <property type="term" value="F:ferrous iron binding"/>
    <property type="evidence" value="ECO:0000314"/>
    <property type="project" value="UniProtKB"/>
</dbReference>
<dbReference type="GO" id="GO:0032453">
    <property type="term" value="F:histone H3K4 demethylase activity"/>
    <property type="evidence" value="ECO:0000314"/>
    <property type="project" value="UniProtKB"/>
</dbReference>
<dbReference type="GO" id="GO:0034647">
    <property type="term" value="F:histone H3K4me/H3K4me2/H3K4me3 demethylase activity"/>
    <property type="evidence" value="ECO:0000318"/>
    <property type="project" value="GO_Central"/>
</dbReference>
<dbReference type="GO" id="GO:0006338">
    <property type="term" value="P:chromatin remodeling"/>
    <property type="evidence" value="ECO:0000318"/>
    <property type="project" value="GO_Central"/>
</dbReference>
<dbReference type="GO" id="GO:0045814">
    <property type="term" value="P:negative regulation of gene expression, epigenetic"/>
    <property type="evidence" value="ECO:0000314"/>
    <property type="project" value="UniProtKB"/>
</dbReference>
<dbReference type="GO" id="GO:0040010">
    <property type="term" value="P:positive regulation of growth rate"/>
    <property type="evidence" value="ECO:0000315"/>
    <property type="project" value="UniProtKB"/>
</dbReference>
<dbReference type="GO" id="GO:0010468">
    <property type="term" value="P:regulation of gene expression"/>
    <property type="evidence" value="ECO:0000318"/>
    <property type="project" value="GO_Central"/>
</dbReference>
<dbReference type="FunFam" id="3.30.160.360:FF:000005">
    <property type="entry name" value="Putative lysine-specific demethylase JMJ16"/>
    <property type="match status" value="1"/>
</dbReference>
<dbReference type="Gene3D" id="3.30.160.360">
    <property type="match status" value="1"/>
</dbReference>
<dbReference type="Gene3D" id="2.60.120.650">
    <property type="entry name" value="Cupin"/>
    <property type="match status" value="1"/>
</dbReference>
<dbReference type="InterPro" id="IPR003889">
    <property type="entry name" value="FYrich_C"/>
</dbReference>
<dbReference type="InterPro" id="IPR003888">
    <property type="entry name" value="FYrich_N"/>
</dbReference>
<dbReference type="InterPro" id="IPR003347">
    <property type="entry name" value="JmjC_dom"/>
</dbReference>
<dbReference type="InterPro" id="IPR003349">
    <property type="entry name" value="JmjN"/>
</dbReference>
<dbReference type="InterPro" id="IPR004198">
    <property type="entry name" value="Znf_C5HC2"/>
</dbReference>
<dbReference type="PANTHER" id="PTHR10694">
    <property type="entry name" value="LYSINE-SPECIFIC DEMETHYLASE"/>
    <property type="match status" value="1"/>
</dbReference>
<dbReference type="PANTHER" id="PTHR10694:SF113">
    <property type="entry name" value="PROTEIN JUMONJI"/>
    <property type="match status" value="1"/>
</dbReference>
<dbReference type="Pfam" id="PF05965">
    <property type="entry name" value="FYRC"/>
    <property type="match status" value="1"/>
</dbReference>
<dbReference type="Pfam" id="PF05964">
    <property type="entry name" value="FYRN"/>
    <property type="match status" value="1"/>
</dbReference>
<dbReference type="Pfam" id="PF02373">
    <property type="entry name" value="JmjC"/>
    <property type="match status" value="1"/>
</dbReference>
<dbReference type="Pfam" id="PF02375">
    <property type="entry name" value="JmjN"/>
    <property type="match status" value="1"/>
</dbReference>
<dbReference type="Pfam" id="PF02928">
    <property type="entry name" value="zf-C5HC2"/>
    <property type="match status" value="1"/>
</dbReference>
<dbReference type="SMART" id="SM00542">
    <property type="entry name" value="FYRC"/>
    <property type="match status" value="1"/>
</dbReference>
<dbReference type="SMART" id="SM00541">
    <property type="entry name" value="FYRN"/>
    <property type="match status" value="1"/>
</dbReference>
<dbReference type="SMART" id="SM00558">
    <property type="entry name" value="JmjC"/>
    <property type="match status" value="1"/>
</dbReference>
<dbReference type="SMART" id="SM00545">
    <property type="entry name" value="JmjN"/>
    <property type="match status" value="1"/>
</dbReference>
<dbReference type="SUPFAM" id="SSF51197">
    <property type="entry name" value="Clavaminate synthase-like"/>
    <property type="match status" value="1"/>
</dbReference>
<dbReference type="PROSITE" id="PS51543">
    <property type="entry name" value="FYRC"/>
    <property type="match status" value="1"/>
</dbReference>
<dbReference type="PROSITE" id="PS51542">
    <property type="entry name" value="FYRN"/>
    <property type="match status" value="1"/>
</dbReference>
<dbReference type="PROSITE" id="PS51184">
    <property type="entry name" value="JMJC"/>
    <property type="match status" value="1"/>
</dbReference>
<dbReference type="PROSITE" id="PS51183">
    <property type="entry name" value="JMJN"/>
    <property type="match status" value="1"/>
</dbReference>
<organism>
    <name type="scientific">Oryza sativa subsp. japonica</name>
    <name type="common">Rice</name>
    <dbReference type="NCBI Taxonomy" id="39947"/>
    <lineage>
        <taxon>Eukaryota</taxon>
        <taxon>Viridiplantae</taxon>
        <taxon>Streptophyta</taxon>
        <taxon>Embryophyta</taxon>
        <taxon>Tracheophyta</taxon>
        <taxon>Spermatophyta</taxon>
        <taxon>Magnoliopsida</taxon>
        <taxon>Liliopsida</taxon>
        <taxon>Poales</taxon>
        <taxon>Poaceae</taxon>
        <taxon>BOP clade</taxon>
        <taxon>Oryzoideae</taxon>
        <taxon>Oryzeae</taxon>
        <taxon>Oryzinae</taxon>
        <taxon>Oryza</taxon>
        <taxon>Oryza sativa</taxon>
    </lineage>
</organism>
<gene>
    <name type="primary">JMJ703</name>
    <name type="ordered locus">Os05g0196500</name>
    <name type="ordered locus">LOC_Os05g10770</name>
    <name type="ORF">P0617H07.8</name>
</gene>
<protein>
    <recommendedName>
        <fullName>Lysine-specific demethylase JMJ703</fullName>
        <ecNumber evidence="6 7">1.14.11.67</ecNumber>
    </recommendedName>
    <alternativeName>
        <fullName>Jumonji domain-containing protein 703</fullName>
    </alternativeName>
    <alternativeName>
        <fullName>Lysine-specific histone demethylase JMJ703</fullName>
    </alternativeName>
    <alternativeName>
        <fullName>Protein JUMONJI 703</fullName>
    </alternativeName>
    <alternativeName>
        <fullName evidence="8">[histone H3]-trimethyl-L-lysine(4) demethylase JMJ703</fullName>
    </alternativeName>
</protein>